<reference key="1">
    <citation type="journal article" date="2001" name="Nature">
        <title>Genome sequence and gene compaction of the eukaryote parasite Encephalitozoon cuniculi.</title>
        <authorList>
            <person name="Katinka M.D."/>
            <person name="Duprat S."/>
            <person name="Cornillot E."/>
            <person name="Metenier G."/>
            <person name="Thomarat F."/>
            <person name="Prensier G."/>
            <person name="Barbe V."/>
            <person name="Peyretaillade E."/>
            <person name="Brottier P."/>
            <person name="Wincker P."/>
            <person name="Delbac F."/>
            <person name="El Alaoui H."/>
            <person name="Peyret P."/>
            <person name="Saurin W."/>
            <person name="Gouy M."/>
            <person name="Weissenbach J."/>
            <person name="Vivares C.P."/>
        </authorList>
    </citation>
    <scope>NUCLEOTIDE SEQUENCE [LARGE SCALE GENOMIC DNA]</scope>
    <source>
        <strain>GB-M1</strain>
    </source>
</reference>
<feature type="chain" id="PRO_0000223111" description="UPF0328 protein ECU02_0020/ECU04_1700">
    <location>
        <begin position="1"/>
        <end position="261"/>
    </location>
</feature>
<feature type="region of interest" description="Disordered" evidence="1">
    <location>
        <begin position="1"/>
        <end position="20"/>
    </location>
</feature>
<feature type="compositionally biased region" description="Basic and acidic residues" evidence="1">
    <location>
        <begin position="11"/>
        <end position="20"/>
    </location>
</feature>
<gene>
    <name type="ordered locus">ECU02_0020</name>
</gene>
<gene>
    <name type="ordered locus">ECU04_1700</name>
</gene>
<organism>
    <name type="scientific">Encephalitozoon cuniculi (strain GB-M1)</name>
    <name type="common">Microsporidian parasite</name>
    <dbReference type="NCBI Taxonomy" id="284813"/>
    <lineage>
        <taxon>Eukaryota</taxon>
        <taxon>Fungi</taxon>
        <taxon>Fungi incertae sedis</taxon>
        <taxon>Microsporidia</taxon>
        <taxon>Unikaryonidae</taxon>
        <taxon>Encephalitozoon</taxon>
    </lineage>
</organism>
<keyword id="KW-1185">Reference proteome</keyword>
<protein>
    <recommendedName>
        <fullName>UPF0328 protein ECU02_0020/ECU04_1700</fullName>
    </recommendedName>
</protein>
<sequence length="261" mass="30120">MSITSIPQPHETNEQHHTEIQHHRSAILNNDLVVLISIAFSALLYFIFDKDNFEKNPCLRLITTLFPLSYLAAQHLLLFHTSWKGNNKPEDTLHKALRYFFSALFITFATIFILSIIILTNDNWSKDDDPLFFSIVLPSFFIPPTYLLSISCSLVPGQTGFTDTGINILIDVLILLCFIVNFIFMHEKSKYRLYSAVTFPLLVLVRLLTEKYYPSGKSSLPTTTWRVVAFVLIFILVIYTYTDMGCEAILTLDYYFTYLTR</sequence>
<accession>Q8ST35</accession>
<evidence type="ECO:0000256" key="1">
    <source>
        <dbReference type="SAM" id="MobiDB-lite"/>
    </source>
</evidence>
<evidence type="ECO:0000305" key="2"/>
<dbReference type="EMBL" id="AL590442">
    <property type="protein sequence ID" value="CAD25033.1"/>
    <property type="molecule type" value="Genomic_DNA"/>
</dbReference>
<dbReference type="EMBL" id="AL590444">
    <property type="protein sequence ID" value="CAD25359.1"/>
    <property type="molecule type" value="Genomic_DNA"/>
</dbReference>
<dbReference type="RefSeq" id="NP_584529.1">
    <property type="nucleotide sequence ID" value="NM_001040718.1"/>
</dbReference>
<dbReference type="RefSeq" id="NP_584855.1">
    <property type="nucleotide sequence ID" value="NM_001041205.1"/>
</dbReference>
<dbReference type="GeneID" id="858519"/>
<dbReference type="GeneID" id="859003"/>
<dbReference type="KEGG" id="ecu:ECU02_0020"/>
<dbReference type="KEGG" id="ecu:ECU04_1700"/>
<dbReference type="VEuPathDB" id="MicrosporidiaDB:ECU02_0020"/>
<dbReference type="VEuPathDB" id="MicrosporidiaDB:ECU04_1700"/>
<dbReference type="HOGENOM" id="CLU_059413_0_0_1"/>
<dbReference type="InParanoid" id="Q8ST35"/>
<dbReference type="OrthoDB" id="2195091at2759"/>
<dbReference type="Proteomes" id="UP000000819">
    <property type="component" value="Chromosome II"/>
</dbReference>
<dbReference type="Proteomes" id="UP000000819">
    <property type="component" value="Chromosome IV"/>
</dbReference>
<dbReference type="InterPro" id="IPR019081">
    <property type="entry name" value="UPF0328"/>
</dbReference>
<dbReference type="Pfam" id="PF09591">
    <property type="entry name" value="DUF2463"/>
    <property type="match status" value="1"/>
</dbReference>
<comment type="similarity">
    <text evidence="2">Belongs to the UPF0328 family.</text>
</comment>
<name>Y202_ENCCU</name>
<proteinExistence type="inferred from homology"/>